<proteinExistence type="inferred from homology"/>
<organism>
    <name type="scientific">Staphylococcus aureus (strain NCTC 8325 / PS 47)</name>
    <dbReference type="NCBI Taxonomy" id="93061"/>
    <lineage>
        <taxon>Bacteria</taxon>
        <taxon>Bacillati</taxon>
        <taxon>Bacillota</taxon>
        <taxon>Bacilli</taxon>
        <taxon>Bacillales</taxon>
        <taxon>Staphylococcaceae</taxon>
        <taxon>Staphylococcus</taxon>
    </lineage>
</organism>
<sequence length="383" mass="43144">MNELEFVTKHRRHLHQHPELSLHEFETTAYIKAFLDSLNIKYDCPLETGVIAYLEGNGSHTIAYRADIDALPILEENDVPYRSQSDHVMHACGHDGHTTALMLFVQRCKDMQDAGQLPQNVVFIFQPAEETGGGANRLIKAGAFDKYPIEAVFGIHVNPFADEGIAVIRDEEITASATEYRFFLTGLSSHVADKEQGHSCGEALQHVLTQISQIQQFHLNGLKRNIVHIGHFKAGEAINTVPSNGYLEGTIRTYDIDDLTIVKNQMHKIAESVKLLFNVDCEVKFAEGYPPTINSPKLRTQIEDALIKADLNVYDKPTPFLFGEDFSFYGQQLAPAYFVFIGTRNEDKGFVTGLHTSHLNFDEKVLINVVNFYENLLNNYKEV</sequence>
<dbReference type="EC" id="3.-.-.-"/>
<dbReference type="EMBL" id="AF306669">
    <property type="protein sequence ID" value="AAG42249.1"/>
    <property type="molecule type" value="Genomic_DNA"/>
</dbReference>
<dbReference type="EMBL" id="CP000253">
    <property type="protein sequence ID" value="ABD30493.1"/>
    <property type="molecule type" value="Genomic_DNA"/>
</dbReference>
<dbReference type="RefSeq" id="WP_001003793.1">
    <property type="nucleotide sequence ID" value="NZ_LS483365.1"/>
</dbReference>
<dbReference type="RefSeq" id="YP_499926.1">
    <property type="nucleotide sequence ID" value="NC_007795.1"/>
</dbReference>
<dbReference type="SMR" id="Q2FYN6"/>
<dbReference type="STRING" id="93061.SAOUHSC_01399"/>
<dbReference type="PaxDb" id="1280-SAXN108_1414"/>
<dbReference type="GeneID" id="3920689"/>
<dbReference type="KEGG" id="sao:SAOUHSC_01399"/>
<dbReference type="PATRIC" id="fig|93061.5.peg.1280"/>
<dbReference type="eggNOG" id="COG1473">
    <property type="taxonomic scope" value="Bacteria"/>
</dbReference>
<dbReference type="HOGENOM" id="CLU_023257_1_0_9"/>
<dbReference type="OrthoDB" id="9776731at2"/>
<dbReference type="PRO" id="PR:Q2FYN6"/>
<dbReference type="Proteomes" id="UP000008816">
    <property type="component" value="Chromosome"/>
</dbReference>
<dbReference type="GO" id="GO:0016787">
    <property type="term" value="F:hydrolase activity"/>
    <property type="evidence" value="ECO:0000318"/>
    <property type="project" value="GO_Central"/>
</dbReference>
<dbReference type="FunFam" id="3.30.70.360:FF:000022">
    <property type="entry name" value="Hippurate hydrolase"/>
    <property type="match status" value="1"/>
</dbReference>
<dbReference type="Gene3D" id="3.30.70.360">
    <property type="match status" value="1"/>
</dbReference>
<dbReference type="Gene3D" id="3.40.630.10">
    <property type="entry name" value="Zn peptidases"/>
    <property type="match status" value="1"/>
</dbReference>
<dbReference type="InterPro" id="IPR017439">
    <property type="entry name" value="Amidohydrolase"/>
</dbReference>
<dbReference type="InterPro" id="IPR036264">
    <property type="entry name" value="Bact_exopeptidase_dim_dom"/>
</dbReference>
<dbReference type="InterPro" id="IPR002933">
    <property type="entry name" value="Peptidase_M20"/>
</dbReference>
<dbReference type="InterPro" id="IPR011650">
    <property type="entry name" value="Peptidase_M20_dimer"/>
</dbReference>
<dbReference type="NCBIfam" id="TIGR01891">
    <property type="entry name" value="amidohydrolases"/>
    <property type="match status" value="1"/>
</dbReference>
<dbReference type="PANTHER" id="PTHR11014:SF63">
    <property type="entry name" value="METALLOPEPTIDASE, PUTATIVE (AFU_ORTHOLOGUE AFUA_6G09600)-RELATED"/>
    <property type="match status" value="1"/>
</dbReference>
<dbReference type="PANTHER" id="PTHR11014">
    <property type="entry name" value="PEPTIDASE M20 FAMILY MEMBER"/>
    <property type="match status" value="1"/>
</dbReference>
<dbReference type="Pfam" id="PF07687">
    <property type="entry name" value="M20_dimer"/>
    <property type="match status" value="1"/>
</dbReference>
<dbReference type="Pfam" id="PF01546">
    <property type="entry name" value="Peptidase_M20"/>
    <property type="match status" value="1"/>
</dbReference>
<dbReference type="PIRSF" id="PIRSF005962">
    <property type="entry name" value="Pept_M20D_amidohydro"/>
    <property type="match status" value="1"/>
</dbReference>
<dbReference type="SUPFAM" id="SSF55031">
    <property type="entry name" value="Bacterial exopeptidase dimerisation domain"/>
    <property type="match status" value="1"/>
</dbReference>
<dbReference type="SUPFAM" id="SSF53187">
    <property type="entry name" value="Zn-dependent exopeptidases"/>
    <property type="match status" value="1"/>
</dbReference>
<comment type="similarity">
    <text evidence="1">Belongs to the peptidase M20 family.</text>
</comment>
<evidence type="ECO:0000305" key="1"/>
<feature type="chain" id="PRO_0000298625" description="Uncharacterized hydrolase SAOUHSC_01399">
    <location>
        <begin position="1"/>
        <end position="383"/>
    </location>
</feature>
<feature type="sequence conflict" description="In Ref. 1; AAG42249." evidence="1" ref="1">
    <original>V</original>
    <variation>I</variation>
    <location>
        <position position="370"/>
    </location>
</feature>
<keyword id="KW-0378">Hydrolase</keyword>
<keyword id="KW-1185">Reference proteome</keyword>
<accession>Q2FYN6</accession>
<accession>Q9EZ09</accession>
<name>Y1399_STAA8</name>
<protein>
    <recommendedName>
        <fullName>Uncharacterized hydrolase SAOUHSC_01399</fullName>
        <ecNumber>3.-.-.-</ecNumber>
    </recommendedName>
</protein>
<gene>
    <name type="ordered locus">SAOUHSC_01399</name>
</gene>
<reference key="1">
    <citation type="journal article" date="2001" name="Infect. Immun.">
        <title>Identification and analysis of Staphylococcus aureus components expressed by a model system of growth in serum.</title>
        <authorList>
            <person name="Wiltshire M.D."/>
            <person name="Foster S.J."/>
        </authorList>
    </citation>
    <scope>NUCLEOTIDE SEQUENCE [GENOMIC DNA]</scope>
</reference>
<reference key="2">
    <citation type="book" date="2006" name="Gram positive pathogens, 2nd edition">
        <title>The Staphylococcus aureus NCTC 8325 genome.</title>
        <editorList>
            <person name="Fischetti V."/>
            <person name="Novick R."/>
            <person name="Ferretti J."/>
            <person name="Portnoy D."/>
            <person name="Rood J."/>
        </editorList>
        <authorList>
            <person name="Gillaspy A.F."/>
            <person name="Worrell V."/>
            <person name="Orvis J."/>
            <person name="Roe B.A."/>
            <person name="Dyer D.W."/>
            <person name="Iandolo J.J."/>
        </authorList>
    </citation>
    <scope>NUCLEOTIDE SEQUENCE [LARGE SCALE GENOMIC DNA]</scope>
    <source>
        <strain>NCTC 8325 / PS 47</strain>
    </source>
</reference>